<reference key="1">
    <citation type="journal article" date="1998" name="Nature">
        <title>Deciphering the biology of Mycobacterium tuberculosis from the complete genome sequence.</title>
        <authorList>
            <person name="Cole S.T."/>
            <person name="Brosch R."/>
            <person name="Parkhill J."/>
            <person name="Garnier T."/>
            <person name="Churcher C.M."/>
            <person name="Harris D.E."/>
            <person name="Gordon S.V."/>
            <person name="Eiglmeier K."/>
            <person name="Gas S."/>
            <person name="Barry C.E. III"/>
            <person name="Tekaia F."/>
            <person name="Badcock K."/>
            <person name="Basham D."/>
            <person name="Brown D."/>
            <person name="Chillingworth T."/>
            <person name="Connor R."/>
            <person name="Davies R.M."/>
            <person name="Devlin K."/>
            <person name="Feltwell T."/>
            <person name="Gentles S."/>
            <person name="Hamlin N."/>
            <person name="Holroyd S."/>
            <person name="Hornsby T."/>
            <person name="Jagels K."/>
            <person name="Krogh A."/>
            <person name="McLean J."/>
            <person name="Moule S."/>
            <person name="Murphy L.D."/>
            <person name="Oliver S."/>
            <person name="Osborne J."/>
            <person name="Quail M.A."/>
            <person name="Rajandream M.A."/>
            <person name="Rogers J."/>
            <person name="Rutter S."/>
            <person name="Seeger K."/>
            <person name="Skelton S."/>
            <person name="Squares S."/>
            <person name="Squares R."/>
            <person name="Sulston J.E."/>
            <person name="Taylor K."/>
            <person name="Whitehead S."/>
            <person name="Barrell B.G."/>
        </authorList>
    </citation>
    <scope>NUCLEOTIDE SEQUENCE [LARGE SCALE GENOMIC DNA]</scope>
    <source>
        <strain>ATCC 25618 / H37Rv</strain>
    </source>
</reference>
<reference key="2">
    <citation type="journal article" date="2008" name="BMC Syst. Biol.">
        <title>targetTB: a target identification pipeline for Mycobacterium tuberculosis through an interactome, reactome and genome-scale structural analysis.</title>
        <authorList>
            <person name="Raman K."/>
            <person name="Yeturu K."/>
            <person name="Chandra N."/>
        </authorList>
    </citation>
    <scope>IDENTIFICATION AS A DRUG TARGET [LARGE SCALE ANALYSIS]</scope>
</reference>
<reference key="3">
    <citation type="journal article" date="2002" name="Microbiology">
        <title>Characterization of a Mycobacterium tuberculosis H37Rv transposon library reveals insertions in 351 ORFs and mutants with altered virulence.</title>
        <authorList>
            <person name="McAdam R.A."/>
            <person name="Quan S."/>
            <person name="Smith D.A."/>
            <person name="Bardarov S."/>
            <person name="Betts J.C."/>
            <person name="Cook F.C."/>
            <person name="Hooker E.U."/>
            <person name="Lewis A.P."/>
            <person name="Woollard P."/>
            <person name="Everett M.J."/>
            <person name="Lukey P.T."/>
            <person name="Bancroft G.J."/>
            <person name="Jacobs W.R. Jr."/>
            <person name="Duncan K."/>
        </authorList>
    </citation>
    <scope>DISRUPTION PHENOTYPE</scope>
    <scope>FUNCTION IN VIRULENCE</scope>
    <source>
        <strain>ATCC 25618 / H37Rv</strain>
    </source>
</reference>
<reference key="4">
    <citation type="journal article" date="2011" name="Mol. Cell. Proteomics">
        <title>Proteogenomic analysis of Mycobacterium tuberculosis by high resolution mass spectrometry.</title>
        <authorList>
            <person name="Kelkar D.S."/>
            <person name="Kumar D."/>
            <person name="Kumar P."/>
            <person name="Balakrishnan L."/>
            <person name="Muthusamy B."/>
            <person name="Yadav A.K."/>
            <person name="Shrivastava P."/>
            <person name="Marimuthu A."/>
            <person name="Anand S."/>
            <person name="Sundaram H."/>
            <person name="Kingsbury R."/>
            <person name="Harsha H.C."/>
            <person name="Nair B."/>
            <person name="Prasad T.S."/>
            <person name="Chauhan D.S."/>
            <person name="Katoch K."/>
            <person name="Katoch V.M."/>
            <person name="Kumar P."/>
            <person name="Chaerkady R."/>
            <person name="Ramachandran S."/>
            <person name="Dash D."/>
            <person name="Pandey A."/>
        </authorList>
    </citation>
    <scope>IDENTIFICATION BY MASS SPECTROMETRY [LARGE SCALE ANALYSIS]</scope>
    <source>
        <strain>ATCC 25618 / H37Rv</strain>
    </source>
</reference>
<reference key="5">
    <citation type="submission" date="2014-03" db="PDB data bank">
        <title>Crystal structure of a putative uncharacterized protein Rv3404c and likely sugar N-formyltransferase from Mycobacterium tuberculosis.</title>
        <authorList>
            <person name="Edwards T.E."/>
            <person name="Dranow D.M."/>
        </authorList>
    </citation>
    <scope>X-RAY CRYSTALLOGRAPHY (2.10 ANGSTROMS) OF APOENZYME AND IN COMPLEX WITH UDP</scope>
    <scope>SUBUNIT</scope>
</reference>
<reference key="6">
    <citation type="journal article" date="2017" name="Biochemistry">
        <title>Biochemical investigation of Rv3404c from Mycobacterium tuberculosis.</title>
        <authorList>
            <person name="Dunsirn M.M."/>
            <person name="Thoden J.B."/>
            <person name="Gilbert M."/>
            <person name="Holden H.M."/>
        </authorList>
    </citation>
    <scope>X-RAY CRYSTALLOGRAPHY (1.60 ANGSTROMS) IN COMPLEX WITH N(5)-FORMYLTETRAHYDROFOLATE AND DTDP-4-AMINO-4,6-DIDEOXYGLUCOSE</scope>
    <scope>FUNCTION</scope>
    <scope>CATALYTIC ACTIVITY</scope>
    <scope>SUBSTRATE SPECIFICITY</scope>
    <scope>BIOPHYSICOCHEMICAL PROPERTIES</scope>
    <scope>SUBUNIT</scope>
    <scope>ACTIVE SITE</scope>
</reference>
<name>SUGFT_MYCTU</name>
<proteinExistence type="evidence at protein level"/>
<keyword id="KW-0002">3D-structure</keyword>
<keyword id="KW-0119">Carbohydrate metabolism</keyword>
<keyword id="KW-1185">Reference proteome</keyword>
<keyword id="KW-0808">Transferase</keyword>
<evidence type="ECO:0000269" key="1">
    <source>
    </source>
</evidence>
<evidence type="ECO:0000269" key="2">
    <source>
    </source>
</evidence>
<evidence type="ECO:0000269" key="3">
    <source ref="5"/>
</evidence>
<evidence type="ECO:0000305" key="4"/>
<evidence type="ECO:0000305" key="5">
    <source>
    </source>
</evidence>
<evidence type="ECO:0000305" key="6">
    <source>
    </source>
</evidence>
<evidence type="ECO:0007744" key="7">
    <source>
        <dbReference type="PDB" id="5VYQ"/>
    </source>
</evidence>
<evidence type="ECO:0007829" key="8">
    <source>
        <dbReference type="PDB" id="5VYQ"/>
    </source>
</evidence>
<accession>P9WKZ3</accession>
<accession>L0TFA5</accession>
<accession>P65073</accession>
<accession>Q50721</accession>
<organism>
    <name type="scientific">Mycobacterium tuberculosis (strain ATCC 25618 / H37Rv)</name>
    <dbReference type="NCBI Taxonomy" id="83332"/>
    <lineage>
        <taxon>Bacteria</taxon>
        <taxon>Bacillati</taxon>
        <taxon>Actinomycetota</taxon>
        <taxon>Actinomycetes</taxon>
        <taxon>Mycobacteriales</taxon>
        <taxon>Mycobacteriaceae</taxon>
        <taxon>Mycobacterium</taxon>
        <taxon>Mycobacterium tuberculosis complex</taxon>
    </lineage>
</organism>
<comment type="function">
    <text evidence="1 2">Sugar N-formyltransferase that catalyzes the conversion of dTDP-4-amino-4,6-dideoxyglucose into dTDP-4-formamido-4,6-dideoxyglucose using N(10)-formyltetrahydrofolate as the carbon source (PubMed:28665588). Plays a role in virulence (PubMed:12368431). Has no activity on dTDP-3-amino-3,6-dideoxyglucose, dTDP-3-amino-3,6-dideoxygalactose, UDP-4-amino-4-deoxyarabinose, and GDP-4-amino-4,6-dideoxymannose (PubMed:28665588).</text>
</comment>
<comment type="catalytic activity">
    <reaction evidence="2">
        <text>dTDP-4-amino-4,6-dideoxy-alpha-D-glucose + (6R)-10-formyltetrahydrofolate = dTDP-4-formamido-4,6-dideoxy-alpha-D-glucose + (6S)-5,6,7,8-tetrahydrofolate + H(+)</text>
        <dbReference type="Rhea" id="RHEA:54032"/>
        <dbReference type="ChEBI" id="CHEBI:15378"/>
        <dbReference type="ChEBI" id="CHEBI:57453"/>
        <dbReference type="ChEBI" id="CHEBI:68501"/>
        <dbReference type="ChEBI" id="CHEBI:138034"/>
        <dbReference type="ChEBI" id="CHEBI:195366"/>
    </reaction>
</comment>
<comment type="biophysicochemical properties">
    <kinetics>
        <KM evidence="2">0.08 mM for dTDP-4-amino-4,6-dideoxy-alpha-D-glucose</KM>
        <text evidence="2">kcat is 0.9 sec(-1).</text>
    </kinetics>
</comment>
<comment type="subunit">
    <text evidence="2 3">Homodimer.</text>
</comment>
<comment type="disruption phenotype">
    <text evidence="1">Mice infected with M.tuberculosis H37Rv mutants for Rv3404c present a highly significant increase in their survival time as compared with mice infected with the parental strain.</text>
</comment>
<comment type="miscellaneous">
    <text evidence="5">Was identified as a high-confidence drug target.</text>
</comment>
<comment type="similarity">
    <text evidence="4">Belongs to the dTDP-Qui4N formyltransferase family.</text>
</comment>
<sequence>MTILILTDNVHAHALAVDLQARHGDMDVYQSPIGQLPGVPRCDVAERVAEIVERYDLVLSFHCKQRFPAALIDGVRCVNVHPGFNPYNRGWFPQVFSIIDGQKVGVTIHEIDDQLDHGPIIAQRECAIESWDSSGSVYARLMDIERELVLEHFDAIRDGSYTAKSPATEGNLNLKKDFEQLRRLDLNERGTFGHFLNRLRALTHDDFRNAWFVDASGRKVFVRVVLEPEKPAEA</sequence>
<dbReference type="EC" id="2.1.2.-" evidence="2"/>
<dbReference type="EMBL" id="AL123456">
    <property type="protein sequence ID" value="CCP46226.1"/>
    <property type="molecule type" value="Genomic_DNA"/>
</dbReference>
<dbReference type="PIR" id="A70736">
    <property type="entry name" value="A70736"/>
</dbReference>
<dbReference type="RefSeq" id="NP_217921.1">
    <property type="nucleotide sequence ID" value="NC_000962.3"/>
</dbReference>
<dbReference type="RefSeq" id="WP_003417980.1">
    <property type="nucleotide sequence ID" value="NZ_NVQJ01000027.1"/>
</dbReference>
<dbReference type="PDB" id="4PZU">
    <property type="method" value="X-ray"/>
    <property type="resolution" value="2.10 A"/>
    <property type="chains" value="A/B/C/D/E/F/G/H=2-234"/>
</dbReference>
<dbReference type="PDB" id="4Q12">
    <property type="method" value="X-ray"/>
    <property type="resolution" value="2.85 A"/>
    <property type="chains" value="A/B=2-234"/>
</dbReference>
<dbReference type="PDB" id="5VYQ">
    <property type="method" value="X-ray"/>
    <property type="resolution" value="1.60 A"/>
    <property type="chains" value="A/B=2-234"/>
</dbReference>
<dbReference type="PDBsum" id="4PZU"/>
<dbReference type="PDBsum" id="4Q12"/>
<dbReference type="PDBsum" id="5VYQ"/>
<dbReference type="SMR" id="P9WKZ3"/>
<dbReference type="STRING" id="83332.Rv3404c"/>
<dbReference type="PaxDb" id="83332-Rv3404c"/>
<dbReference type="DNASU" id="887902"/>
<dbReference type="GeneID" id="887902"/>
<dbReference type="KEGG" id="mtu:Rv3404c"/>
<dbReference type="KEGG" id="mtv:RVBD_3404c"/>
<dbReference type="TubercuList" id="Rv3404c"/>
<dbReference type="eggNOG" id="COG0223">
    <property type="taxonomic scope" value="Bacteria"/>
</dbReference>
<dbReference type="InParanoid" id="P9WKZ3"/>
<dbReference type="OrthoDB" id="9802815at2"/>
<dbReference type="PhylomeDB" id="P9WKZ3"/>
<dbReference type="SABIO-RK" id="P9WKZ3"/>
<dbReference type="EvolutionaryTrace" id="P9WKZ3"/>
<dbReference type="PHI-base" id="PHI:3642"/>
<dbReference type="Proteomes" id="UP000001584">
    <property type="component" value="Chromosome"/>
</dbReference>
<dbReference type="GO" id="GO:0005829">
    <property type="term" value="C:cytosol"/>
    <property type="evidence" value="ECO:0000318"/>
    <property type="project" value="GO_Central"/>
</dbReference>
<dbReference type="GO" id="GO:0016742">
    <property type="term" value="F:hydroxymethyl-, formyl- and related transferase activity"/>
    <property type="evidence" value="ECO:0000314"/>
    <property type="project" value="UniProtKB"/>
</dbReference>
<dbReference type="GO" id="GO:0004479">
    <property type="term" value="F:methionyl-tRNA formyltransferase activity"/>
    <property type="evidence" value="ECO:0000318"/>
    <property type="project" value="GO_Central"/>
</dbReference>
<dbReference type="GO" id="GO:0042803">
    <property type="term" value="F:protein homodimerization activity"/>
    <property type="evidence" value="ECO:0000314"/>
    <property type="project" value="UniProtKB"/>
</dbReference>
<dbReference type="GO" id="GO:0071951">
    <property type="term" value="P:conversion of methionyl-tRNA to N-formyl-methionyl-tRNA"/>
    <property type="evidence" value="ECO:0000318"/>
    <property type="project" value="GO_Central"/>
</dbReference>
<dbReference type="Gene3D" id="3.40.50.170">
    <property type="entry name" value="Formyl transferase, N-terminal domain"/>
    <property type="match status" value="1"/>
</dbReference>
<dbReference type="InterPro" id="IPR002376">
    <property type="entry name" value="Formyl_transf_N"/>
</dbReference>
<dbReference type="InterPro" id="IPR036477">
    <property type="entry name" value="Formyl_transf_N_sf"/>
</dbReference>
<dbReference type="InterPro" id="IPR040660">
    <property type="entry name" value="N_formyltrans_C"/>
</dbReference>
<dbReference type="NCBIfam" id="NF005755">
    <property type="entry name" value="PRK07579.1"/>
    <property type="match status" value="1"/>
</dbReference>
<dbReference type="PANTHER" id="PTHR11138">
    <property type="entry name" value="METHIONYL-TRNA FORMYLTRANSFERASE"/>
    <property type="match status" value="1"/>
</dbReference>
<dbReference type="PANTHER" id="PTHR11138:SF5">
    <property type="entry name" value="METHIONYL-TRNA FORMYLTRANSFERASE, MITOCHONDRIAL"/>
    <property type="match status" value="1"/>
</dbReference>
<dbReference type="Pfam" id="PF00551">
    <property type="entry name" value="Formyl_trans_N"/>
    <property type="match status" value="1"/>
</dbReference>
<dbReference type="Pfam" id="PF18216">
    <property type="entry name" value="N_formyltrans_C"/>
    <property type="match status" value="1"/>
</dbReference>
<dbReference type="SUPFAM" id="SSF53328">
    <property type="entry name" value="Formyltransferase"/>
    <property type="match status" value="1"/>
</dbReference>
<feature type="chain" id="PRO_0000014151" description="dTDP-4-amino-4,6-dideoxyglucose formyltransferase">
    <location>
        <begin position="1"/>
        <end position="234"/>
    </location>
</feature>
<feature type="active site" description="Proton acceptor" evidence="6">
    <location>
        <position position="81"/>
    </location>
</feature>
<feature type="binding site" evidence="2 7">
    <location>
        <position position="9"/>
    </location>
    <ligand>
        <name>dTDP-4-amino-4,6-dideoxy-alpha-D-glucose</name>
        <dbReference type="ChEBI" id="CHEBI:68501"/>
    </ligand>
</feature>
<feature type="binding site" evidence="2 7">
    <location>
        <begin position="62"/>
        <end position="64"/>
    </location>
    <ligand>
        <name>dTDP-4-amino-4,6-dideoxy-alpha-D-glucose</name>
        <dbReference type="ChEBI" id="CHEBI:68501"/>
    </ligand>
</feature>
<feature type="binding site" evidence="2 7">
    <location>
        <begin position="65"/>
        <end position="67"/>
    </location>
    <ligand>
        <name>(6R)-10-formyltetrahydrofolate</name>
        <dbReference type="ChEBI" id="CHEBI:195366"/>
    </ligand>
</feature>
<feature type="binding site" evidence="2 7">
    <location>
        <begin position="90"/>
        <end position="94"/>
    </location>
    <ligand>
        <name>dTDP-4-amino-4,6-dideoxy-alpha-D-glucose</name>
        <dbReference type="ChEBI" id="CHEBI:68501"/>
    </ligand>
</feature>
<feature type="binding site" evidence="2 7">
    <location>
        <position position="112"/>
    </location>
    <ligand>
        <name>(6R)-10-formyltetrahydrofolate</name>
        <dbReference type="ChEBI" id="CHEBI:195366"/>
    </ligand>
</feature>
<feature type="binding site" evidence="2 7">
    <location>
        <position position="116"/>
    </location>
    <ligand>
        <name>(6R)-10-formyltetrahydrofolate</name>
        <dbReference type="ChEBI" id="CHEBI:195366"/>
    </ligand>
</feature>
<feature type="binding site" evidence="2 7">
    <location>
        <position position="175"/>
    </location>
    <ligand>
        <name>(6R)-10-formyltetrahydrofolate</name>
        <dbReference type="ChEBI" id="CHEBI:195366"/>
    </ligand>
</feature>
<feature type="binding site" evidence="2 7">
    <location>
        <position position="209"/>
    </location>
    <ligand>
        <name>dTDP-4-amino-4,6-dideoxy-alpha-D-glucose</name>
        <dbReference type="ChEBI" id="CHEBI:68501"/>
    </ligand>
</feature>
<feature type="strand" evidence="8">
    <location>
        <begin position="3"/>
        <end position="7"/>
    </location>
</feature>
<feature type="helix" evidence="8">
    <location>
        <begin position="10"/>
        <end position="22"/>
    </location>
</feature>
<feature type="strand" evidence="8">
    <location>
        <begin position="24"/>
        <end position="30"/>
    </location>
</feature>
<feature type="helix" evidence="8">
    <location>
        <begin position="44"/>
        <end position="54"/>
    </location>
</feature>
<feature type="strand" evidence="8">
    <location>
        <begin position="56"/>
        <end position="62"/>
    </location>
</feature>
<feature type="helix" evidence="8">
    <location>
        <begin position="69"/>
        <end position="74"/>
    </location>
</feature>
<feature type="strand" evidence="8">
    <location>
        <begin position="75"/>
        <end position="83"/>
    </location>
</feature>
<feature type="turn" evidence="8">
    <location>
        <begin position="85"/>
        <end position="88"/>
    </location>
</feature>
<feature type="strand" evidence="8">
    <location>
        <begin position="89"/>
        <end position="91"/>
    </location>
</feature>
<feature type="helix" evidence="8">
    <location>
        <begin position="93"/>
        <end position="100"/>
    </location>
</feature>
<feature type="strand" evidence="8">
    <location>
        <begin position="104"/>
        <end position="110"/>
    </location>
</feature>
<feature type="strand" evidence="8">
    <location>
        <begin position="120"/>
        <end position="126"/>
    </location>
</feature>
<feature type="helix" evidence="8">
    <location>
        <begin position="134"/>
        <end position="158"/>
    </location>
</feature>
<feature type="helix" evidence="8">
    <location>
        <begin position="175"/>
        <end position="182"/>
    </location>
</feature>
<feature type="strand" evidence="8">
    <location>
        <begin position="189"/>
        <end position="191"/>
    </location>
</feature>
<feature type="helix" evidence="8">
    <location>
        <begin position="192"/>
        <end position="201"/>
    </location>
</feature>
<feature type="strand" evidence="8">
    <location>
        <begin position="210"/>
        <end position="213"/>
    </location>
</feature>
<feature type="strand" evidence="8">
    <location>
        <begin position="219"/>
        <end position="228"/>
    </location>
</feature>
<gene>
    <name type="ordered locus">Rv3404c</name>
    <name type="ORF">MTCY78.24</name>
</gene>
<protein>
    <recommendedName>
        <fullName evidence="6">dTDP-4-amino-4,6-dideoxyglucose formyltransferase</fullName>
        <shortName evidence="6">dTDP-Qui4N formyltransferase</shortName>
        <ecNumber evidence="2">2.1.2.-</ecNumber>
    </recommendedName>
    <alternativeName>
        <fullName evidence="6">Sugar N-formyltransferase Rv3404c</fullName>
    </alternativeName>
</protein>